<feature type="transit peptide" description="Mitochondrion" evidence="3">
    <location>
        <begin position="1"/>
        <end position="29"/>
    </location>
</feature>
<feature type="chain" id="PRO_0000014479" description="Translation initiation factor IF-2, mitochondrial">
    <location>
        <begin position="30"/>
        <end position="727"/>
    </location>
</feature>
<feature type="domain" description="tr-type G">
    <location>
        <begin position="178"/>
        <end position="348"/>
    </location>
</feature>
<feature type="region of interest" description="G1" evidence="1">
    <location>
        <begin position="187"/>
        <end position="194"/>
    </location>
</feature>
<feature type="region of interest" description="G2" evidence="1">
    <location>
        <begin position="212"/>
        <end position="216"/>
    </location>
</feature>
<feature type="region of interest" description="G3" evidence="1">
    <location>
        <begin position="234"/>
        <end position="237"/>
    </location>
</feature>
<feature type="region of interest" description="G4" evidence="1">
    <location>
        <begin position="288"/>
        <end position="291"/>
    </location>
</feature>
<feature type="region of interest" description="G5" evidence="1">
    <location>
        <begin position="324"/>
        <end position="326"/>
    </location>
</feature>
<feature type="binding site" evidence="1">
    <location>
        <begin position="187"/>
        <end position="194"/>
    </location>
    <ligand>
        <name>GTP</name>
        <dbReference type="ChEBI" id="CHEBI:37565"/>
    </ligand>
</feature>
<feature type="binding site" evidence="1">
    <location>
        <begin position="234"/>
        <end position="237"/>
    </location>
    <ligand>
        <name>GTP</name>
        <dbReference type="ChEBI" id="CHEBI:37565"/>
    </ligand>
</feature>
<feature type="binding site" evidence="1">
    <location>
        <begin position="288"/>
        <end position="291"/>
    </location>
    <ligand>
        <name>GTP</name>
        <dbReference type="ChEBI" id="CHEBI:37565"/>
    </ligand>
</feature>
<feature type="modified residue" description="Phosphothreonine" evidence="2">
    <location>
        <position position="688"/>
    </location>
</feature>
<proteinExistence type="evidence at protein level"/>
<comment type="function">
    <text>One of the essential components for the initiation of protein synthesis. Protects formylmethionyl-tRNA from spontaneous hydrolysis and promotes its binding to the 30S ribosomal subunits. Also involved in the hydrolysis of GTP during the formation of the 70S ribosomal complex.</text>
</comment>
<comment type="subunit">
    <text>Monomer.</text>
</comment>
<comment type="subcellular location">
    <subcellularLocation>
        <location>Mitochondrion</location>
    </subcellularLocation>
</comment>
<comment type="similarity">
    <text evidence="4">Belongs to the TRAFAC class translation factor GTPase superfamily. Classic translation factor GTPase family. IF-2 subfamily.</text>
</comment>
<accession>P46198</accession>
<accession>A6QR53</accession>
<gene>
    <name type="primary">MTIF2</name>
</gene>
<sequence>MNRKILKLENLLRFHTICRQLHSLCQRRMLAQWRHMFSSAYAVHTAQLYTRPWQTDALLRAALSQRRLLVTKKEKRSQKSPLPSTKSKKEVEVWLGMTVEELARAMEKDIDCVYESLMNTAIDIDSLETHSRLDEVWIKEVIKKSGMKLKWSKLKQDKVRENKDAVKRPQADPALLIPRSPVVTIMGHVDHGKTTLLDKLRKTQVAAMEAGGITQHIGAFLVSLPSGEKITFLDTPGHAAFSAMRARGTQVTDIVILVVAADDGVMKQTVESIQHAKDAHVPIVLAINKCDKAEADPEKVKKELLAYDVVCEDYGGDVQAVHVSALTGENMMALAEATIALAEMLELKADPTGAVEGTVIESFTDKGRGPVTTAIIQRGTLRKGSILVAGKSWAKVRLMFDENGRAVNEAYPSMPVGIIGWRDLPSAGDEILEVESEPRAREVVDWRKYEQEQEKNKEDLKLIEEKRKEHQEAHRKDREKYGTVHWKERSYIKYREKRQQQPLKPKEKLERDSNVLPVIVKGDVDGSVEAILNVMDTYDASHECELDLVHFGVGDISENDVNLAETFHGVIYGFNVNAGNVIQQLAAKKGVKIKLHKIIYRLIEDLQEELSSRLPCIVEEHPIGEASILATFSITEGKKKVPVAGCRVQKGQIEKQKKFKLIRNGHVIWKGSLISLKHHKDDTSVVKTGMDCGLSLDEEKIEFKVGDAIICYEEKEVPAKTSWDPGF</sequence>
<organism>
    <name type="scientific">Bos taurus</name>
    <name type="common">Bovine</name>
    <dbReference type="NCBI Taxonomy" id="9913"/>
    <lineage>
        <taxon>Eukaryota</taxon>
        <taxon>Metazoa</taxon>
        <taxon>Chordata</taxon>
        <taxon>Craniata</taxon>
        <taxon>Vertebrata</taxon>
        <taxon>Euteleostomi</taxon>
        <taxon>Mammalia</taxon>
        <taxon>Eutheria</taxon>
        <taxon>Laurasiatheria</taxon>
        <taxon>Artiodactyla</taxon>
        <taxon>Ruminantia</taxon>
        <taxon>Pecora</taxon>
        <taxon>Bovidae</taxon>
        <taxon>Bovinae</taxon>
        <taxon>Bos</taxon>
    </lineage>
</organism>
<keyword id="KW-0002">3D-structure</keyword>
<keyword id="KW-0903">Direct protein sequencing</keyword>
<keyword id="KW-0342">GTP-binding</keyword>
<keyword id="KW-0396">Initiation factor</keyword>
<keyword id="KW-0496">Mitochondrion</keyword>
<keyword id="KW-0547">Nucleotide-binding</keyword>
<keyword id="KW-0597">Phosphoprotein</keyword>
<keyword id="KW-0648">Protein biosynthesis</keyword>
<keyword id="KW-1185">Reference proteome</keyword>
<keyword id="KW-0809">Transit peptide</keyword>
<evidence type="ECO:0000250" key="1"/>
<evidence type="ECO:0000250" key="2">
    <source>
        <dbReference type="UniProtKB" id="Q91YJ5"/>
    </source>
</evidence>
<evidence type="ECO:0000255" key="3"/>
<evidence type="ECO:0000305" key="4"/>
<name>IF2M_BOVIN</name>
<reference key="1">
    <citation type="journal article" date="1995" name="Biochim. Biophys. Acta">
        <title>Cloning and sequence analysis of the cDNA for bovine mitochondrial translational initiation factor 2.</title>
        <authorList>
            <person name="Ma J."/>
            <person name="Farwell M.A."/>
            <person name="Burkhart W.A."/>
            <person name="Spremulli L.L."/>
        </authorList>
    </citation>
    <scope>NUCLEOTIDE SEQUENCE [MRNA]</scope>
    <scope>PARTIAL PROTEIN SEQUENCE</scope>
    <source>
        <tissue>Liver</tissue>
    </source>
</reference>
<reference key="2">
    <citation type="submission" date="2007-07" db="EMBL/GenBank/DDBJ databases">
        <authorList>
            <consortium name="NIH - Mammalian Gene Collection (MGC) project"/>
        </authorList>
    </citation>
    <scope>NUCLEOTIDE SEQUENCE [LARGE SCALE MRNA]</scope>
    <source>
        <strain>Hereford</strain>
        <tissue>Basal ganglia</tissue>
    </source>
</reference>
<protein>
    <recommendedName>
        <fullName>Translation initiation factor IF-2, mitochondrial</fullName>
        <shortName>IF-2(Mt)</shortName>
        <shortName>IF-2Mt</shortName>
        <shortName>IF2(mt)</shortName>
    </recommendedName>
</protein>
<dbReference type="EMBL" id="L37835">
    <property type="protein sequence ID" value="AAB05558.1"/>
    <property type="molecule type" value="mRNA"/>
</dbReference>
<dbReference type="EMBL" id="BC150118">
    <property type="protein sequence ID" value="AAI50119.1"/>
    <property type="molecule type" value="mRNA"/>
</dbReference>
<dbReference type="PIR" id="S53707">
    <property type="entry name" value="S53707"/>
</dbReference>
<dbReference type="RefSeq" id="NP_776818.1">
    <property type="nucleotide sequence ID" value="NM_174393.2"/>
</dbReference>
<dbReference type="RefSeq" id="XP_024854056.1">
    <property type="nucleotide sequence ID" value="XM_024998288.2"/>
</dbReference>
<dbReference type="PDB" id="3IZY">
    <property type="method" value="EM"/>
    <property type="chains" value="P=177-713"/>
</dbReference>
<dbReference type="PDBsum" id="3IZY"/>
<dbReference type="EMDB" id="EMD-1855"/>
<dbReference type="SMR" id="P46198"/>
<dbReference type="FunCoup" id="P46198">
    <property type="interactions" value="1798"/>
</dbReference>
<dbReference type="STRING" id="9913.ENSBTAP00000020573"/>
<dbReference type="PaxDb" id="9913-ENSBTAP00000020573"/>
<dbReference type="GeneID" id="281923"/>
<dbReference type="KEGG" id="bta:281923"/>
<dbReference type="CTD" id="4528"/>
<dbReference type="VEuPathDB" id="HostDB:ENSBTAG00000015481"/>
<dbReference type="eggNOG" id="KOG1145">
    <property type="taxonomic scope" value="Eukaryota"/>
</dbReference>
<dbReference type="HOGENOM" id="CLU_006301_5_2_1"/>
<dbReference type="InParanoid" id="P46198"/>
<dbReference type="OMA" id="TIVCYQI"/>
<dbReference type="OrthoDB" id="361630at2759"/>
<dbReference type="TreeFam" id="TF105682"/>
<dbReference type="EvolutionaryTrace" id="P46198"/>
<dbReference type="Proteomes" id="UP000009136">
    <property type="component" value="Chromosome 11"/>
</dbReference>
<dbReference type="GO" id="GO:0005737">
    <property type="term" value="C:cytoplasm"/>
    <property type="evidence" value="ECO:0000318"/>
    <property type="project" value="GO_Central"/>
</dbReference>
<dbReference type="GO" id="GO:0005759">
    <property type="term" value="C:mitochondrial matrix"/>
    <property type="evidence" value="ECO:0000304"/>
    <property type="project" value="Reactome"/>
</dbReference>
<dbReference type="GO" id="GO:0005739">
    <property type="term" value="C:mitochondrion"/>
    <property type="evidence" value="ECO:0000314"/>
    <property type="project" value="BHF-UCL"/>
</dbReference>
<dbReference type="GO" id="GO:0005525">
    <property type="term" value="F:GTP binding"/>
    <property type="evidence" value="ECO:0007669"/>
    <property type="project" value="UniProtKB-KW"/>
</dbReference>
<dbReference type="GO" id="GO:0003924">
    <property type="term" value="F:GTPase activity"/>
    <property type="evidence" value="ECO:0007669"/>
    <property type="project" value="InterPro"/>
</dbReference>
<dbReference type="GO" id="GO:0043024">
    <property type="term" value="F:ribosomal small subunit binding"/>
    <property type="evidence" value="ECO:0000314"/>
    <property type="project" value="HGNC-UCL"/>
</dbReference>
<dbReference type="GO" id="GO:0008135">
    <property type="term" value="F:translation factor activity, RNA binding"/>
    <property type="evidence" value="ECO:0000314"/>
    <property type="project" value="HGNC-UCL"/>
</dbReference>
<dbReference type="GO" id="GO:0003743">
    <property type="term" value="F:translation initiation factor activity"/>
    <property type="evidence" value="ECO:0000318"/>
    <property type="project" value="GO_Central"/>
</dbReference>
<dbReference type="GO" id="GO:0070124">
    <property type="term" value="P:mitochondrial translational initiation"/>
    <property type="evidence" value="ECO:0000314"/>
    <property type="project" value="BHF-UCL"/>
</dbReference>
<dbReference type="GO" id="GO:0032790">
    <property type="term" value="P:ribosome disassembly"/>
    <property type="evidence" value="ECO:0000314"/>
    <property type="project" value="BHF-UCL"/>
</dbReference>
<dbReference type="CDD" id="cd01887">
    <property type="entry name" value="IF2_eIF5B"/>
    <property type="match status" value="1"/>
</dbReference>
<dbReference type="CDD" id="cd03702">
    <property type="entry name" value="IF2_mtIF2_II"/>
    <property type="match status" value="1"/>
</dbReference>
<dbReference type="CDD" id="cd03692">
    <property type="entry name" value="mtIF2_IVc"/>
    <property type="match status" value="1"/>
</dbReference>
<dbReference type="FunFam" id="2.40.30.10:FF:000007">
    <property type="entry name" value="Translation initiation factor IF-2"/>
    <property type="match status" value="1"/>
</dbReference>
<dbReference type="FunFam" id="3.40.50.300:FF:000019">
    <property type="entry name" value="Translation initiation factor IF-2"/>
    <property type="match status" value="1"/>
</dbReference>
<dbReference type="FunFam" id="2.40.30.10:FF:000072">
    <property type="entry name" value="translation initiation factor IF-2, mitochondrial isoform X1"/>
    <property type="match status" value="1"/>
</dbReference>
<dbReference type="FunFam" id="3.40.50.10050:FF:000003">
    <property type="entry name" value="translation initiation factor IF-2, mitochondrial isoform X1"/>
    <property type="match status" value="1"/>
</dbReference>
<dbReference type="Gene3D" id="3.40.50.300">
    <property type="entry name" value="P-loop containing nucleotide triphosphate hydrolases"/>
    <property type="match status" value="1"/>
</dbReference>
<dbReference type="Gene3D" id="2.40.30.10">
    <property type="entry name" value="Translation factors"/>
    <property type="match status" value="2"/>
</dbReference>
<dbReference type="Gene3D" id="3.40.50.10050">
    <property type="entry name" value="Translation initiation factor IF- 2, domain 3"/>
    <property type="match status" value="1"/>
</dbReference>
<dbReference type="HAMAP" id="MF_00100_B">
    <property type="entry name" value="IF_2_B"/>
    <property type="match status" value="1"/>
</dbReference>
<dbReference type="InterPro" id="IPR053905">
    <property type="entry name" value="EF-G-like_DII"/>
</dbReference>
<dbReference type="InterPro" id="IPR044145">
    <property type="entry name" value="IF2_II"/>
</dbReference>
<dbReference type="InterPro" id="IPR027417">
    <property type="entry name" value="P-loop_NTPase"/>
</dbReference>
<dbReference type="InterPro" id="IPR005225">
    <property type="entry name" value="Small_GTP-bd"/>
</dbReference>
<dbReference type="InterPro" id="IPR000795">
    <property type="entry name" value="T_Tr_GTP-bd_dom"/>
</dbReference>
<dbReference type="InterPro" id="IPR000178">
    <property type="entry name" value="TF_IF2_bacterial-like"/>
</dbReference>
<dbReference type="InterPro" id="IPR015760">
    <property type="entry name" value="TIF_IF2"/>
</dbReference>
<dbReference type="InterPro" id="IPR023115">
    <property type="entry name" value="TIF_IF2_dom3"/>
</dbReference>
<dbReference type="InterPro" id="IPR036925">
    <property type="entry name" value="TIF_IF2_dom3_sf"/>
</dbReference>
<dbReference type="InterPro" id="IPR009000">
    <property type="entry name" value="Transl_B-barrel_sf"/>
</dbReference>
<dbReference type="NCBIfam" id="TIGR00231">
    <property type="entry name" value="small_GTP"/>
    <property type="match status" value="1"/>
</dbReference>
<dbReference type="PANTHER" id="PTHR43381:SF20">
    <property type="entry name" value="TRANSLATION INITIATION FACTOR IF-2, MITOCHONDRIAL"/>
    <property type="match status" value="1"/>
</dbReference>
<dbReference type="PANTHER" id="PTHR43381">
    <property type="entry name" value="TRANSLATION INITIATION FACTOR IF-2-RELATED"/>
    <property type="match status" value="1"/>
</dbReference>
<dbReference type="Pfam" id="PF22042">
    <property type="entry name" value="EF-G_D2"/>
    <property type="match status" value="1"/>
</dbReference>
<dbReference type="Pfam" id="PF00009">
    <property type="entry name" value="GTP_EFTU"/>
    <property type="match status" value="1"/>
</dbReference>
<dbReference type="Pfam" id="PF11987">
    <property type="entry name" value="IF-2"/>
    <property type="match status" value="1"/>
</dbReference>
<dbReference type="SUPFAM" id="SSF52156">
    <property type="entry name" value="Initiation factor IF2/eIF5b, domain 3"/>
    <property type="match status" value="1"/>
</dbReference>
<dbReference type="SUPFAM" id="SSF52540">
    <property type="entry name" value="P-loop containing nucleoside triphosphate hydrolases"/>
    <property type="match status" value="1"/>
</dbReference>
<dbReference type="SUPFAM" id="SSF50447">
    <property type="entry name" value="Translation proteins"/>
    <property type="match status" value="2"/>
</dbReference>
<dbReference type="PROSITE" id="PS51722">
    <property type="entry name" value="G_TR_2"/>
    <property type="match status" value="1"/>
</dbReference>
<dbReference type="PROSITE" id="PS01176">
    <property type="entry name" value="IF2"/>
    <property type="match status" value="1"/>
</dbReference>